<geneLocation type="chloroplast"/>
<organism>
    <name type="scientific">Muscari comosum</name>
    <name type="common">Tassel grape hyacinth</name>
    <name type="synonym">Leopoldia comosa</name>
    <dbReference type="NCBI Taxonomy" id="81770"/>
    <lineage>
        <taxon>Eukaryota</taxon>
        <taxon>Viridiplantae</taxon>
        <taxon>Streptophyta</taxon>
        <taxon>Embryophyta</taxon>
        <taxon>Tracheophyta</taxon>
        <taxon>Spermatophyta</taxon>
        <taxon>Magnoliopsida</taxon>
        <taxon>Liliopsida</taxon>
        <taxon>Asparagales</taxon>
        <taxon>Hyacinthaceae</taxon>
        <taxon>Hyacinthoideae</taxon>
        <taxon>Hyacintheae</taxon>
        <taxon>Muscari</taxon>
    </lineage>
</organism>
<sequence>MTIDRTYPIFTVRWLAVHGLAVPTVSFLGSISAMQFIQR</sequence>
<feature type="chain" id="PRO_0000200423" description="Cytochrome b559 subunit beta">
    <location>
        <begin position="1"/>
        <end position="39"/>
    </location>
</feature>
<feature type="transmembrane region" description="Helical" evidence="1">
    <location>
        <begin position="14"/>
        <end position="30"/>
    </location>
</feature>
<feature type="binding site" description="axial binding residue" evidence="1">
    <location>
        <position position="18"/>
    </location>
    <ligand>
        <name>heme</name>
        <dbReference type="ChEBI" id="CHEBI:30413"/>
        <note>ligand shared with alpha subunit</note>
    </ligand>
    <ligandPart>
        <name>Fe</name>
        <dbReference type="ChEBI" id="CHEBI:18248"/>
    </ligandPart>
</feature>
<accession>Q67H93</accession>
<protein>
    <recommendedName>
        <fullName evidence="1">Cytochrome b559 subunit beta</fullName>
    </recommendedName>
    <alternativeName>
        <fullName evidence="1">PSII reaction center subunit VI</fullName>
    </alternativeName>
</protein>
<comment type="function">
    <text evidence="1">This b-type cytochrome is tightly associated with the reaction center of photosystem II (PSII). PSII is a light-driven water:plastoquinone oxidoreductase that uses light energy to abstract electrons from H(2)O, generating O(2) and a proton gradient subsequently used for ATP formation. It consists of a core antenna complex that captures photons, and an electron transfer chain that converts photonic excitation into a charge separation.</text>
</comment>
<comment type="cofactor">
    <cofactor evidence="1">
        <name>heme b</name>
        <dbReference type="ChEBI" id="CHEBI:60344"/>
    </cofactor>
    <text evidence="1">With its partner (PsbE) binds heme. PSII binds additional chlorophylls, carotenoids and specific lipids.</text>
</comment>
<comment type="subunit">
    <text evidence="1">Heterodimer of an alpha subunit and a beta subunit. PSII is composed of 1 copy each of membrane proteins PsbA, PsbB, PsbC, PsbD, PsbE, PsbF, PsbH, PsbI, PsbJ, PsbK, PsbL, PsbM, PsbT, PsbX, PsbY, PsbZ, Psb30/Ycf12, at least 3 peripheral proteins of the oxygen-evolving complex and a large number of cofactors. It forms dimeric complexes.</text>
</comment>
<comment type="subcellular location">
    <subcellularLocation>
        <location evidence="1">Plastid</location>
        <location evidence="1">Chloroplast thylakoid membrane</location>
        <topology evidence="1">Single-pass membrane protein</topology>
    </subcellularLocation>
</comment>
<comment type="similarity">
    <text evidence="1">Belongs to the PsbE/PsbF family.</text>
</comment>
<reference key="1">
    <citation type="submission" date="2002-09" db="EMBL/GenBank/DDBJ databases">
        <title>Phylogenetic relationships among the major lineages of Asparagales based on a large chloroplast data set.</title>
        <authorList>
            <person name="McPherson M.A."/>
            <person name="Rai H.S."/>
            <person name="Wong W.A."/>
            <person name="Graham S.W."/>
        </authorList>
    </citation>
    <scope>NUCLEOTIDE SEQUENCE [GENOMIC DNA]</scope>
</reference>
<evidence type="ECO:0000255" key="1">
    <source>
        <dbReference type="HAMAP-Rule" id="MF_00643"/>
    </source>
</evidence>
<keyword id="KW-0150">Chloroplast</keyword>
<keyword id="KW-0249">Electron transport</keyword>
<keyword id="KW-0349">Heme</keyword>
<keyword id="KW-0408">Iron</keyword>
<keyword id="KW-0472">Membrane</keyword>
<keyword id="KW-0479">Metal-binding</keyword>
<keyword id="KW-0602">Photosynthesis</keyword>
<keyword id="KW-0604">Photosystem II</keyword>
<keyword id="KW-0934">Plastid</keyword>
<keyword id="KW-0793">Thylakoid</keyword>
<keyword id="KW-0812">Transmembrane</keyword>
<keyword id="KW-1133">Transmembrane helix</keyword>
<keyword id="KW-0813">Transport</keyword>
<dbReference type="EMBL" id="AY147590">
    <property type="protein sequence ID" value="AAN32461.1"/>
    <property type="molecule type" value="Genomic_DNA"/>
</dbReference>
<dbReference type="SMR" id="Q67H93"/>
<dbReference type="GO" id="GO:0009535">
    <property type="term" value="C:chloroplast thylakoid membrane"/>
    <property type="evidence" value="ECO:0007669"/>
    <property type="project" value="UniProtKB-SubCell"/>
</dbReference>
<dbReference type="GO" id="GO:0009539">
    <property type="term" value="C:photosystem II reaction center"/>
    <property type="evidence" value="ECO:0007669"/>
    <property type="project" value="InterPro"/>
</dbReference>
<dbReference type="GO" id="GO:0009055">
    <property type="term" value="F:electron transfer activity"/>
    <property type="evidence" value="ECO:0007669"/>
    <property type="project" value="UniProtKB-UniRule"/>
</dbReference>
<dbReference type="GO" id="GO:0020037">
    <property type="term" value="F:heme binding"/>
    <property type="evidence" value="ECO:0007669"/>
    <property type="project" value="InterPro"/>
</dbReference>
<dbReference type="GO" id="GO:0005506">
    <property type="term" value="F:iron ion binding"/>
    <property type="evidence" value="ECO:0007669"/>
    <property type="project" value="UniProtKB-UniRule"/>
</dbReference>
<dbReference type="GO" id="GO:0009767">
    <property type="term" value="P:photosynthetic electron transport chain"/>
    <property type="evidence" value="ECO:0007669"/>
    <property type="project" value="InterPro"/>
</dbReference>
<dbReference type="HAMAP" id="MF_00643">
    <property type="entry name" value="PSII_PsbF"/>
    <property type="match status" value="1"/>
</dbReference>
<dbReference type="InterPro" id="IPR006241">
    <property type="entry name" value="PSII_cyt_b559_bsu"/>
</dbReference>
<dbReference type="InterPro" id="IPR006216">
    <property type="entry name" value="PSII_cyt_b559_CS"/>
</dbReference>
<dbReference type="InterPro" id="IPR013081">
    <property type="entry name" value="PSII_cyt_b559_N"/>
</dbReference>
<dbReference type="NCBIfam" id="TIGR01333">
    <property type="entry name" value="cyt_b559_beta"/>
    <property type="match status" value="1"/>
</dbReference>
<dbReference type="Pfam" id="PF00283">
    <property type="entry name" value="Cytochrom_B559"/>
    <property type="match status" value="1"/>
</dbReference>
<dbReference type="PIRSF" id="PIRSF000037">
    <property type="entry name" value="PsbF"/>
    <property type="match status" value="1"/>
</dbReference>
<dbReference type="SUPFAM" id="SSF161045">
    <property type="entry name" value="Cytochrome b559 subunits"/>
    <property type="match status" value="1"/>
</dbReference>
<dbReference type="PROSITE" id="PS00537">
    <property type="entry name" value="CYTOCHROME_B559"/>
    <property type="match status" value="1"/>
</dbReference>
<name>PSBF_MUSCM</name>
<proteinExistence type="inferred from homology"/>
<gene>
    <name evidence="1" type="primary">psbF</name>
</gene>